<dbReference type="EMBL" id="AP009240">
    <property type="protein sequence ID" value="BAG76585.1"/>
    <property type="molecule type" value="Genomic_DNA"/>
</dbReference>
<dbReference type="RefSeq" id="WP_000024560.1">
    <property type="nucleotide sequence ID" value="NC_011415.1"/>
</dbReference>
<dbReference type="SMR" id="B6I975"/>
<dbReference type="GeneID" id="93776412"/>
<dbReference type="KEGG" id="ecy:ECSE_1061"/>
<dbReference type="HOGENOM" id="CLU_144710_3_1_6"/>
<dbReference type="Proteomes" id="UP000008199">
    <property type="component" value="Chromosome"/>
</dbReference>
<dbReference type="FunFam" id="1.10.1660.10:FF:000006">
    <property type="entry name" value="Chaperone modulatory protein CbpM"/>
    <property type="match status" value="1"/>
</dbReference>
<dbReference type="Gene3D" id="1.10.1660.10">
    <property type="match status" value="1"/>
</dbReference>
<dbReference type="HAMAP" id="MF_01155">
    <property type="entry name" value="CbpM"/>
    <property type="match status" value="1"/>
</dbReference>
<dbReference type="InterPro" id="IPR022835">
    <property type="entry name" value="CbpM"/>
</dbReference>
<dbReference type="NCBIfam" id="NF007617">
    <property type="entry name" value="PRK10265.1"/>
    <property type="match status" value="1"/>
</dbReference>
<dbReference type="Pfam" id="PF13591">
    <property type="entry name" value="MerR_2"/>
    <property type="match status" value="1"/>
</dbReference>
<evidence type="ECO:0000255" key="1">
    <source>
        <dbReference type="HAMAP-Rule" id="MF_01155"/>
    </source>
</evidence>
<proteinExistence type="inferred from homology"/>
<comment type="function">
    <text evidence="1">Interacts with CbpA and inhibits both the DnaJ-like co-chaperone activity and the DNA binding activity of CbpA. Together with CbpA, modulates the activity of the DnaK chaperone system. Does not inhibit the co-chaperone activity of DnaJ.</text>
</comment>
<comment type="similarity">
    <text evidence="1">Belongs to the CbpM family.</text>
</comment>
<protein>
    <recommendedName>
        <fullName evidence="1">Chaperone modulatory protein CbpM</fullName>
    </recommendedName>
</protein>
<feature type="chain" id="PRO_1000137772" description="Chaperone modulatory protein CbpM">
    <location>
        <begin position="1"/>
        <end position="101"/>
    </location>
</feature>
<sequence length="101" mass="11512">MANVTVTFTITEFCLHTGISEEELNEIVGLGVVEPREIQETTWVFDDHAAIVVQRAVRLRHELALDWPGIAVALTLMDDIAHLKQENRLLRQRLSRFVAHP</sequence>
<gene>
    <name evidence="1" type="primary">cbpM</name>
    <name type="ordered locus">ECSE_1061</name>
</gene>
<organism>
    <name type="scientific">Escherichia coli (strain SE11)</name>
    <dbReference type="NCBI Taxonomy" id="409438"/>
    <lineage>
        <taxon>Bacteria</taxon>
        <taxon>Pseudomonadati</taxon>
        <taxon>Pseudomonadota</taxon>
        <taxon>Gammaproteobacteria</taxon>
        <taxon>Enterobacterales</taxon>
        <taxon>Enterobacteriaceae</taxon>
        <taxon>Escherichia</taxon>
    </lineage>
</organism>
<reference key="1">
    <citation type="journal article" date="2008" name="DNA Res.">
        <title>Complete genome sequence and comparative analysis of the wild-type commensal Escherichia coli strain SE11 isolated from a healthy adult.</title>
        <authorList>
            <person name="Oshima K."/>
            <person name="Toh H."/>
            <person name="Ogura Y."/>
            <person name="Sasamoto H."/>
            <person name="Morita H."/>
            <person name="Park S.-H."/>
            <person name="Ooka T."/>
            <person name="Iyoda S."/>
            <person name="Taylor T.D."/>
            <person name="Hayashi T."/>
            <person name="Itoh K."/>
            <person name="Hattori M."/>
        </authorList>
    </citation>
    <scope>NUCLEOTIDE SEQUENCE [LARGE SCALE GENOMIC DNA]</scope>
    <source>
        <strain>SE11</strain>
    </source>
</reference>
<accession>B6I975</accession>
<name>CBPM_ECOSE</name>